<sequence>MSEIKVGENESLDNAIKRFKRQCARSGVLSEYRKREHYEKPSVKKKKKSEAAKRKKRNF</sequence>
<name>RS21_FINM2</name>
<evidence type="ECO:0000255" key="1">
    <source>
        <dbReference type="HAMAP-Rule" id="MF_00358"/>
    </source>
</evidence>
<evidence type="ECO:0000256" key="2">
    <source>
        <dbReference type="SAM" id="MobiDB-lite"/>
    </source>
</evidence>
<evidence type="ECO:0000305" key="3"/>
<accession>B0S1F2</accession>
<dbReference type="EMBL" id="AP008971">
    <property type="protein sequence ID" value="BAG08192.1"/>
    <property type="molecule type" value="Genomic_DNA"/>
</dbReference>
<dbReference type="RefSeq" id="WP_002836438.1">
    <property type="nucleotide sequence ID" value="NC_010376.1"/>
</dbReference>
<dbReference type="SMR" id="B0S1F2"/>
<dbReference type="STRING" id="334413.FMG_0774"/>
<dbReference type="GeneID" id="60840176"/>
<dbReference type="KEGG" id="fma:FMG_0774"/>
<dbReference type="eggNOG" id="COG0828">
    <property type="taxonomic scope" value="Bacteria"/>
</dbReference>
<dbReference type="HOGENOM" id="CLU_159258_1_2_9"/>
<dbReference type="Proteomes" id="UP000001319">
    <property type="component" value="Chromosome"/>
</dbReference>
<dbReference type="GO" id="GO:1990904">
    <property type="term" value="C:ribonucleoprotein complex"/>
    <property type="evidence" value="ECO:0007669"/>
    <property type="project" value="UniProtKB-KW"/>
</dbReference>
<dbReference type="GO" id="GO:0005840">
    <property type="term" value="C:ribosome"/>
    <property type="evidence" value="ECO:0007669"/>
    <property type="project" value="UniProtKB-KW"/>
</dbReference>
<dbReference type="GO" id="GO:0003735">
    <property type="term" value="F:structural constituent of ribosome"/>
    <property type="evidence" value="ECO:0007669"/>
    <property type="project" value="InterPro"/>
</dbReference>
<dbReference type="GO" id="GO:0006412">
    <property type="term" value="P:translation"/>
    <property type="evidence" value="ECO:0007669"/>
    <property type="project" value="UniProtKB-UniRule"/>
</dbReference>
<dbReference type="Gene3D" id="1.20.5.1150">
    <property type="entry name" value="Ribosomal protein S8"/>
    <property type="match status" value="1"/>
</dbReference>
<dbReference type="HAMAP" id="MF_00358">
    <property type="entry name" value="Ribosomal_bS21"/>
    <property type="match status" value="1"/>
</dbReference>
<dbReference type="InterPro" id="IPR001911">
    <property type="entry name" value="Ribosomal_bS21"/>
</dbReference>
<dbReference type="InterPro" id="IPR018278">
    <property type="entry name" value="Ribosomal_bS21_CS"/>
</dbReference>
<dbReference type="InterPro" id="IPR038380">
    <property type="entry name" value="Ribosomal_bS21_sf"/>
</dbReference>
<dbReference type="NCBIfam" id="TIGR00030">
    <property type="entry name" value="S21p"/>
    <property type="match status" value="1"/>
</dbReference>
<dbReference type="PANTHER" id="PTHR21109">
    <property type="entry name" value="MITOCHONDRIAL 28S RIBOSOMAL PROTEIN S21"/>
    <property type="match status" value="1"/>
</dbReference>
<dbReference type="PANTHER" id="PTHR21109:SF22">
    <property type="entry name" value="SMALL RIBOSOMAL SUBUNIT PROTEIN BS21"/>
    <property type="match status" value="1"/>
</dbReference>
<dbReference type="Pfam" id="PF01165">
    <property type="entry name" value="Ribosomal_S21"/>
    <property type="match status" value="1"/>
</dbReference>
<dbReference type="PRINTS" id="PR00976">
    <property type="entry name" value="RIBOSOMALS21"/>
</dbReference>
<dbReference type="PROSITE" id="PS01181">
    <property type="entry name" value="RIBOSOMAL_S21"/>
    <property type="match status" value="1"/>
</dbReference>
<feature type="chain" id="PRO_1000120623" description="Small ribosomal subunit protein bS21">
    <location>
        <begin position="1"/>
        <end position="59"/>
    </location>
</feature>
<feature type="region of interest" description="Disordered" evidence="2">
    <location>
        <begin position="35"/>
        <end position="59"/>
    </location>
</feature>
<feature type="compositionally biased region" description="Basic residues" evidence="2">
    <location>
        <begin position="43"/>
        <end position="59"/>
    </location>
</feature>
<proteinExistence type="inferred from homology"/>
<comment type="similarity">
    <text evidence="1">Belongs to the bacterial ribosomal protein bS21 family.</text>
</comment>
<gene>
    <name evidence="1" type="primary">rpsU</name>
    <name type="ordered locus">FMG_0774</name>
</gene>
<organism>
    <name type="scientific">Finegoldia magna (strain ATCC 29328 / DSM 20472 / WAL 2508)</name>
    <name type="common">Peptostreptococcus magnus</name>
    <dbReference type="NCBI Taxonomy" id="334413"/>
    <lineage>
        <taxon>Bacteria</taxon>
        <taxon>Bacillati</taxon>
        <taxon>Bacillota</taxon>
        <taxon>Tissierellia</taxon>
        <taxon>Tissierellales</taxon>
        <taxon>Peptoniphilaceae</taxon>
        <taxon>Finegoldia</taxon>
    </lineage>
</organism>
<protein>
    <recommendedName>
        <fullName evidence="1">Small ribosomal subunit protein bS21</fullName>
    </recommendedName>
    <alternativeName>
        <fullName evidence="3">30S ribosomal protein S21</fullName>
    </alternativeName>
</protein>
<keyword id="KW-1185">Reference proteome</keyword>
<keyword id="KW-0687">Ribonucleoprotein</keyword>
<keyword id="KW-0689">Ribosomal protein</keyword>
<reference key="1">
    <citation type="journal article" date="2008" name="DNA Res.">
        <title>Complete genome sequence of Finegoldia magna, an anaerobic opportunistic pathogen.</title>
        <authorList>
            <person name="Goto T."/>
            <person name="Yamashita A."/>
            <person name="Hirakawa H."/>
            <person name="Matsutani M."/>
            <person name="Todo K."/>
            <person name="Ohshima K."/>
            <person name="Toh H."/>
            <person name="Miyamoto K."/>
            <person name="Kuhara S."/>
            <person name="Hattori M."/>
            <person name="Shimizu T."/>
            <person name="Akimoto S."/>
        </authorList>
    </citation>
    <scope>NUCLEOTIDE SEQUENCE [LARGE SCALE GENOMIC DNA]</scope>
    <source>
        <strain>ATCC 29328 / DSM 20472 / WAL 2508</strain>
    </source>
</reference>